<dbReference type="EMBL" id="CP000095">
    <property type="protein sequence ID" value="AAZ58475.1"/>
    <property type="molecule type" value="Genomic_DNA"/>
</dbReference>
<dbReference type="RefSeq" id="WP_011125758.1">
    <property type="nucleotide sequence ID" value="NC_007335.2"/>
</dbReference>
<dbReference type="SMR" id="Q46J53"/>
<dbReference type="STRING" id="59920.PMN2A_0985"/>
<dbReference type="KEGG" id="pmn:PMN2A_0985"/>
<dbReference type="HOGENOM" id="CLU_148047_2_0_3"/>
<dbReference type="OrthoDB" id="9810379at2"/>
<dbReference type="PhylomeDB" id="Q46J53"/>
<dbReference type="Proteomes" id="UP000002535">
    <property type="component" value="Chromosome"/>
</dbReference>
<dbReference type="GO" id="GO:0031676">
    <property type="term" value="C:plasma membrane-derived thylakoid membrane"/>
    <property type="evidence" value="ECO:0007669"/>
    <property type="project" value="UniProtKB-SubCell"/>
</dbReference>
<dbReference type="GO" id="GO:0045259">
    <property type="term" value="C:proton-transporting ATP synthase complex"/>
    <property type="evidence" value="ECO:0007669"/>
    <property type="project" value="UniProtKB-KW"/>
</dbReference>
<dbReference type="GO" id="GO:0033177">
    <property type="term" value="C:proton-transporting two-sector ATPase complex, proton-transporting domain"/>
    <property type="evidence" value="ECO:0007669"/>
    <property type="project" value="InterPro"/>
</dbReference>
<dbReference type="GO" id="GO:0008289">
    <property type="term" value="F:lipid binding"/>
    <property type="evidence" value="ECO:0007669"/>
    <property type="project" value="UniProtKB-KW"/>
</dbReference>
<dbReference type="GO" id="GO:0046933">
    <property type="term" value="F:proton-transporting ATP synthase activity, rotational mechanism"/>
    <property type="evidence" value="ECO:0007669"/>
    <property type="project" value="UniProtKB-UniRule"/>
</dbReference>
<dbReference type="CDD" id="cd18183">
    <property type="entry name" value="ATP-synt_Fo_c_ATPH"/>
    <property type="match status" value="1"/>
</dbReference>
<dbReference type="FunFam" id="1.20.20.10:FF:000001">
    <property type="entry name" value="ATP synthase subunit c, chloroplastic"/>
    <property type="match status" value="1"/>
</dbReference>
<dbReference type="Gene3D" id="1.20.20.10">
    <property type="entry name" value="F1F0 ATP synthase subunit C"/>
    <property type="match status" value="1"/>
</dbReference>
<dbReference type="HAMAP" id="MF_01396">
    <property type="entry name" value="ATP_synth_c_bact"/>
    <property type="match status" value="1"/>
</dbReference>
<dbReference type="InterPro" id="IPR005953">
    <property type="entry name" value="ATP_synth_csu_bac/chlpt"/>
</dbReference>
<dbReference type="InterPro" id="IPR000454">
    <property type="entry name" value="ATP_synth_F0_csu"/>
</dbReference>
<dbReference type="InterPro" id="IPR020537">
    <property type="entry name" value="ATP_synth_F0_csu_DDCD_BS"/>
</dbReference>
<dbReference type="InterPro" id="IPR038662">
    <property type="entry name" value="ATP_synth_F0_csu_sf"/>
</dbReference>
<dbReference type="InterPro" id="IPR002379">
    <property type="entry name" value="ATPase_proteolipid_c-like_dom"/>
</dbReference>
<dbReference type="InterPro" id="IPR035921">
    <property type="entry name" value="F/V-ATP_Csub_sf"/>
</dbReference>
<dbReference type="NCBIfam" id="TIGR01260">
    <property type="entry name" value="ATP_synt_c"/>
    <property type="match status" value="1"/>
</dbReference>
<dbReference type="NCBIfam" id="NF005608">
    <property type="entry name" value="PRK07354.1"/>
    <property type="match status" value="1"/>
</dbReference>
<dbReference type="PANTHER" id="PTHR10031">
    <property type="entry name" value="ATP SYNTHASE LIPID-BINDING PROTEIN, MITOCHONDRIAL"/>
    <property type="match status" value="1"/>
</dbReference>
<dbReference type="PANTHER" id="PTHR10031:SF0">
    <property type="entry name" value="ATPASE PROTEIN 9"/>
    <property type="match status" value="1"/>
</dbReference>
<dbReference type="Pfam" id="PF00137">
    <property type="entry name" value="ATP-synt_C"/>
    <property type="match status" value="1"/>
</dbReference>
<dbReference type="PRINTS" id="PR00124">
    <property type="entry name" value="ATPASEC"/>
</dbReference>
<dbReference type="SUPFAM" id="SSF81333">
    <property type="entry name" value="F1F0 ATP synthase subunit C"/>
    <property type="match status" value="1"/>
</dbReference>
<dbReference type="PROSITE" id="PS00605">
    <property type="entry name" value="ATPASE_C"/>
    <property type="match status" value="1"/>
</dbReference>
<comment type="function">
    <text evidence="1">F(1)F(0) ATP synthase produces ATP from ADP in the presence of a proton or sodium gradient. F-type ATPases consist of two structural domains, F(1) containing the extramembraneous catalytic core and F(0) containing the membrane proton channel, linked together by a central stalk and a peripheral stalk. During catalysis, ATP synthesis in the catalytic domain of F(1) is coupled via a rotary mechanism of the central stalk subunits to proton translocation.</text>
</comment>
<comment type="function">
    <text evidence="1">Key component of the F(0) channel; it plays a direct role in translocation across the membrane. A homomeric c-ring of between 10-14 subunits forms the central stalk rotor element with the F(1) delta and epsilon subunits.</text>
</comment>
<comment type="subunit">
    <text evidence="1">F-type ATPases have 2 components, F(1) - the catalytic core - and F(0) - the membrane proton channel. F(1) has five subunits: alpha(3), beta(3), gamma(1), delta(1), epsilon(1). F(0) has four main subunits: a(1), b(1), b'(1) and c(10-14). The alpha and beta chains form an alternating ring which encloses part of the gamma chain. F(1) is attached to F(0) by a central stalk formed by the gamma and epsilon chains, while a peripheral stalk is formed by the delta, b and b' chains.</text>
</comment>
<comment type="subcellular location">
    <subcellularLocation>
        <location evidence="1">Cellular thylakoid membrane</location>
        <topology evidence="1">Multi-pass membrane protein</topology>
    </subcellularLocation>
</comment>
<comment type="similarity">
    <text evidence="1">Belongs to the ATPase C chain family.</text>
</comment>
<proteinExistence type="inferred from homology"/>
<evidence type="ECO:0000255" key="1">
    <source>
        <dbReference type="HAMAP-Rule" id="MF_01396"/>
    </source>
</evidence>
<keyword id="KW-0066">ATP synthesis</keyword>
<keyword id="KW-0138">CF(0)</keyword>
<keyword id="KW-0375">Hydrogen ion transport</keyword>
<keyword id="KW-0406">Ion transport</keyword>
<keyword id="KW-0446">Lipid-binding</keyword>
<keyword id="KW-0472">Membrane</keyword>
<keyword id="KW-1185">Reference proteome</keyword>
<keyword id="KW-0793">Thylakoid</keyword>
<keyword id="KW-0812">Transmembrane</keyword>
<keyword id="KW-1133">Transmembrane helix</keyword>
<keyword id="KW-0813">Transport</keyword>
<gene>
    <name evidence="1" type="primary">atpE</name>
    <name evidence="1" type="synonym">atpH</name>
    <name type="ordered locus">PMN2A_0985</name>
</gene>
<organism>
    <name type="scientific">Prochlorococcus marinus (strain NATL2A)</name>
    <dbReference type="NCBI Taxonomy" id="59920"/>
    <lineage>
        <taxon>Bacteria</taxon>
        <taxon>Bacillati</taxon>
        <taxon>Cyanobacteriota</taxon>
        <taxon>Cyanophyceae</taxon>
        <taxon>Synechococcales</taxon>
        <taxon>Prochlorococcaceae</taxon>
        <taxon>Prochlorococcus</taxon>
    </lineage>
</organism>
<accession>Q46J53</accession>
<sequence>MDSITTAASVVAAGLAVGLGAIGPGIGQGSAAQGAVEGIARQPEAEGKIRGTLLLSFAFMESLTIYGLVVALVLLFANPFAG</sequence>
<reference key="1">
    <citation type="journal article" date="2007" name="PLoS Genet.">
        <title>Patterns and implications of gene gain and loss in the evolution of Prochlorococcus.</title>
        <authorList>
            <person name="Kettler G.C."/>
            <person name="Martiny A.C."/>
            <person name="Huang K."/>
            <person name="Zucker J."/>
            <person name="Coleman M.L."/>
            <person name="Rodrigue S."/>
            <person name="Chen F."/>
            <person name="Lapidus A."/>
            <person name="Ferriera S."/>
            <person name="Johnson J."/>
            <person name="Steglich C."/>
            <person name="Church G.M."/>
            <person name="Richardson P."/>
            <person name="Chisholm S.W."/>
        </authorList>
    </citation>
    <scope>NUCLEOTIDE SEQUENCE [LARGE SCALE GENOMIC DNA]</scope>
    <source>
        <strain>NATL2A</strain>
    </source>
</reference>
<name>ATPL_PROMT</name>
<protein>
    <recommendedName>
        <fullName evidence="1">ATP synthase subunit c</fullName>
    </recommendedName>
    <alternativeName>
        <fullName evidence="1">ATP synthase F(0) sector subunit c</fullName>
    </alternativeName>
    <alternativeName>
        <fullName evidence="1">F-type ATPase subunit c</fullName>
        <shortName evidence="1">F-ATPase subunit c</shortName>
    </alternativeName>
    <alternativeName>
        <fullName evidence="1">Lipid-binding protein</fullName>
    </alternativeName>
</protein>
<feature type="chain" id="PRO_5000100571" description="ATP synthase subunit c">
    <location>
        <begin position="1"/>
        <end position="82"/>
    </location>
</feature>
<feature type="transmembrane region" description="Helical" evidence="1">
    <location>
        <begin position="7"/>
        <end position="27"/>
    </location>
</feature>
<feature type="transmembrane region" description="Helical" evidence="1">
    <location>
        <begin position="57"/>
        <end position="77"/>
    </location>
</feature>
<feature type="site" description="Reversibly protonated during proton transport" evidence="1">
    <location>
        <position position="61"/>
    </location>
</feature>